<feature type="chain" id="PRO_0000382589" description="Ribosomal RNA small subunit methyltransferase F">
    <location>
        <begin position="1"/>
        <end position="479"/>
    </location>
</feature>
<feature type="active site" description="Nucleophile" evidence="1">
    <location>
        <position position="247"/>
    </location>
</feature>
<feature type="binding site" evidence="1">
    <location>
        <begin position="125"/>
        <end position="131"/>
    </location>
    <ligand>
        <name>S-adenosyl-L-methionine</name>
        <dbReference type="ChEBI" id="CHEBI:59789"/>
    </ligand>
</feature>
<feature type="binding site" evidence="1">
    <location>
        <position position="149"/>
    </location>
    <ligand>
        <name>S-adenosyl-L-methionine</name>
        <dbReference type="ChEBI" id="CHEBI:59789"/>
    </ligand>
</feature>
<feature type="binding site" evidence="1">
    <location>
        <position position="176"/>
    </location>
    <ligand>
        <name>S-adenosyl-L-methionine</name>
        <dbReference type="ChEBI" id="CHEBI:59789"/>
    </ligand>
</feature>
<feature type="binding site" evidence="1">
    <location>
        <position position="194"/>
    </location>
    <ligand>
        <name>S-adenosyl-L-methionine</name>
        <dbReference type="ChEBI" id="CHEBI:59789"/>
    </ligand>
</feature>
<keyword id="KW-0963">Cytoplasm</keyword>
<keyword id="KW-0489">Methyltransferase</keyword>
<keyword id="KW-1185">Reference proteome</keyword>
<keyword id="KW-0694">RNA-binding</keyword>
<keyword id="KW-0698">rRNA processing</keyword>
<keyword id="KW-0949">S-adenosyl-L-methionine</keyword>
<keyword id="KW-0808">Transferase</keyword>
<dbReference type="EC" id="2.1.1.178" evidence="1"/>
<dbReference type="EMBL" id="CP001063">
    <property type="protein sequence ID" value="ACD08629.1"/>
    <property type="status" value="ALT_INIT"/>
    <property type="molecule type" value="Genomic_DNA"/>
</dbReference>
<dbReference type="RefSeq" id="WP_024258615.1">
    <property type="nucleotide sequence ID" value="NC_010658.1"/>
</dbReference>
<dbReference type="SMR" id="B2U477"/>
<dbReference type="STRING" id="344609.SbBS512_E2103"/>
<dbReference type="KEGG" id="sbc:SbBS512_E2103"/>
<dbReference type="HOGENOM" id="CLU_005316_6_2_6"/>
<dbReference type="Proteomes" id="UP000001030">
    <property type="component" value="Chromosome"/>
</dbReference>
<dbReference type="GO" id="GO:0005737">
    <property type="term" value="C:cytoplasm"/>
    <property type="evidence" value="ECO:0007669"/>
    <property type="project" value="UniProtKB-SubCell"/>
</dbReference>
<dbReference type="GO" id="GO:0003723">
    <property type="term" value="F:RNA binding"/>
    <property type="evidence" value="ECO:0007669"/>
    <property type="project" value="UniProtKB-KW"/>
</dbReference>
<dbReference type="GO" id="GO:0009383">
    <property type="term" value="F:rRNA (cytosine-C5-)-methyltransferase activity"/>
    <property type="evidence" value="ECO:0007669"/>
    <property type="project" value="TreeGrafter"/>
</dbReference>
<dbReference type="GO" id="GO:0070475">
    <property type="term" value="P:rRNA base methylation"/>
    <property type="evidence" value="ECO:0007669"/>
    <property type="project" value="TreeGrafter"/>
</dbReference>
<dbReference type="CDD" id="cd02440">
    <property type="entry name" value="AdoMet_MTases"/>
    <property type="match status" value="1"/>
</dbReference>
<dbReference type="FunFam" id="3.10.450.720:FF:000001">
    <property type="entry name" value="Ribosomal RNA small subunit methyltransferase F"/>
    <property type="match status" value="1"/>
</dbReference>
<dbReference type="FunFam" id="3.40.50.150:FF:000079">
    <property type="entry name" value="Ribosomal RNA small subunit methyltransferase F"/>
    <property type="match status" value="1"/>
</dbReference>
<dbReference type="Gene3D" id="3.10.450.720">
    <property type="match status" value="1"/>
</dbReference>
<dbReference type="Gene3D" id="3.40.50.150">
    <property type="entry name" value="Vaccinia Virus protein VP39"/>
    <property type="match status" value="1"/>
</dbReference>
<dbReference type="HAMAP" id="MF_01579">
    <property type="entry name" value="16SrRNA_methyltr_F"/>
    <property type="match status" value="1"/>
</dbReference>
<dbReference type="InterPro" id="IPR031341">
    <property type="entry name" value="Methyltr_RsmF_N"/>
</dbReference>
<dbReference type="InterPro" id="IPR049560">
    <property type="entry name" value="MeTrfase_RsmB-F_NOP2_cat"/>
</dbReference>
<dbReference type="InterPro" id="IPR001678">
    <property type="entry name" value="MeTrfase_RsmB-F_NOP2_dom"/>
</dbReference>
<dbReference type="InterPro" id="IPR027391">
    <property type="entry name" value="Nol1_Nop2_Fmu_2"/>
</dbReference>
<dbReference type="InterPro" id="IPR011023">
    <property type="entry name" value="Nop2p"/>
</dbReference>
<dbReference type="InterPro" id="IPR023267">
    <property type="entry name" value="RCMT"/>
</dbReference>
<dbReference type="InterPro" id="IPR023545">
    <property type="entry name" value="rRNA_ssu_MeTfrase_F"/>
</dbReference>
<dbReference type="InterPro" id="IPR018314">
    <property type="entry name" value="RsmB/NOL1/NOP2-like_CS"/>
</dbReference>
<dbReference type="InterPro" id="IPR029063">
    <property type="entry name" value="SAM-dependent_MTases_sf"/>
</dbReference>
<dbReference type="InterPro" id="IPR048457">
    <property type="entry name" value="YebU_pre-PUA_dom"/>
</dbReference>
<dbReference type="NCBIfam" id="TIGR00446">
    <property type="entry name" value="nop2p"/>
    <property type="match status" value="1"/>
</dbReference>
<dbReference type="NCBIfam" id="NF008898">
    <property type="entry name" value="PRK11933.1"/>
    <property type="match status" value="1"/>
</dbReference>
<dbReference type="PANTHER" id="PTHR22807:SF30">
    <property type="entry name" value="28S RRNA (CYTOSINE(4447)-C(5))-METHYLTRANSFERASE-RELATED"/>
    <property type="match status" value="1"/>
</dbReference>
<dbReference type="PANTHER" id="PTHR22807">
    <property type="entry name" value="NOP2 YEAST -RELATED NOL1/NOP2/FMU SUN DOMAIN-CONTAINING"/>
    <property type="match status" value="1"/>
</dbReference>
<dbReference type="Pfam" id="PF01189">
    <property type="entry name" value="Methyltr_RsmB-F"/>
    <property type="match status" value="1"/>
</dbReference>
<dbReference type="Pfam" id="PF17125">
    <property type="entry name" value="Methyltr_RsmF_N"/>
    <property type="match status" value="1"/>
</dbReference>
<dbReference type="Pfam" id="PF13636">
    <property type="entry name" value="Methyltranf_PUA"/>
    <property type="match status" value="1"/>
</dbReference>
<dbReference type="Pfam" id="PF21150">
    <property type="entry name" value="YebU_pre-PUA_dom"/>
    <property type="match status" value="1"/>
</dbReference>
<dbReference type="PRINTS" id="PR02008">
    <property type="entry name" value="RCMTFAMILY"/>
</dbReference>
<dbReference type="SUPFAM" id="SSF53335">
    <property type="entry name" value="S-adenosyl-L-methionine-dependent methyltransferases"/>
    <property type="match status" value="1"/>
</dbReference>
<dbReference type="PROSITE" id="PS01153">
    <property type="entry name" value="NOL1_NOP2_SUN"/>
    <property type="match status" value="1"/>
</dbReference>
<dbReference type="PROSITE" id="PS51686">
    <property type="entry name" value="SAM_MT_RSMB_NOP"/>
    <property type="match status" value="1"/>
</dbReference>
<sequence>MAQHTVYFPDAFLTQMREAMPSTLSFDDFLAACQRPLRRSIRVNTLKISVADFLQLTAPYGWTLTPIPWCEEGFWIERDNEDALPLGSTAEHLSGLFYIQEASSMLPVAALFADGNAPQRVMDVAAAPGSKTTQIAARMNNEGAILANEFSASRVKVLHANISRCGISNVALTHFDGRVFGAAVPEMFDAILLDAPCSGEGVVRKDPDALKNWSPESNQEIAATQRELIDSAFHALRPGGTLVYSTCTLNQEENEAVCLWLKETYPDAVEFLPLGDLFPGANKALTEEGFLHVFPQIYDCEGFFVARLRKTQAIPALPAPKYKVGNFPFSPVKDREAGQIRQAAADVGLNWDENLRLWQRDKELWLFPVGIEALIGKVRFSRLGIKLAETHNKGYRWQHEAVIALATPDNVNAFELTPQEAEEWYRGRDVYPQAAPVADDVLVTFQHQPIGLAKRIGSRLKNSYPRELVRDGKLFTGNA</sequence>
<reference key="1">
    <citation type="submission" date="2008-05" db="EMBL/GenBank/DDBJ databases">
        <title>Complete sequence of Shigella boydii serotype 18 strain BS512.</title>
        <authorList>
            <person name="Rasko D.A."/>
            <person name="Rosovitz M."/>
            <person name="Maurelli A.T."/>
            <person name="Myers G."/>
            <person name="Seshadri R."/>
            <person name="Cer R."/>
            <person name="Jiang L."/>
            <person name="Ravel J."/>
            <person name="Sebastian Y."/>
        </authorList>
    </citation>
    <scope>NUCLEOTIDE SEQUENCE [LARGE SCALE GENOMIC DNA]</scope>
    <source>
        <strain>CDC 3083-94 / BS512</strain>
    </source>
</reference>
<organism>
    <name type="scientific">Shigella boydii serotype 18 (strain CDC 3083-94 / BS512)</name>
    <dbReference type="NCBI Taxonomy" id="344609"/>
    <lineage>
        <taxon>Bacteria</taxon>
        <taxon>Pseudomonadati</taxon>
        <taxon>Pseudomonadota</taxon>
        <taxon>Gammaproteobacteria</taxon>
        <taxon>Enterobacterales</taxon>
        <taxon>Enterobacteriaceae</taxon>
        <taxon>Shigella</taxon>
    </lineage>
</organism>
<evidence type="ECO:0000255" key="1">
    <source>
        <dbReference type="HAMAP-Rule" id="MF_01579"/>
    </source>
</evidence>
<evidence type="ECO:0000305" key="2"/>
<comment type="function">
    <text evidence="1">Specifically methylates the cytosine at position 1407 (m5C1407) of 16S rRNA.</text>
</comment>
<comment type="catalytic activity">
    <reaction evidence="1">
        <text>cytidine(1407) in 16S rRNA + S-adenosyl-L-methionine = 5-methylcytidine(1407) in 16S rRNA + S-adenosyl-L-homocysteine + H(+)</text>
        <dbReference type="Rhea" id="RHEA:42756"/>
        <dbReference type="Rhea" id="RHEA-COMP:10223"/>
        <dbReference type="Rhea" id="RHEA-COMP:10224"/>
        <dbReference type="ChEBI" id="CHEBI:15378"/>
        <dbReference type="ChEBI" id="CHEBI:57856"/>
        <dbReference type="ChEBI" id="CHEBI:59789"/>
        <dbReference type="ChEBI" id="CHEBI:74483"/>
        <dbReference type="ChEBI" id="CHEBI:82748"/>
        <dbReference type="EC" id="2.1.1.178"/>
    </reaction>
</comment>
<comment type="subcellular location">
    <subcellularLocation>
        <location evidence="1">Cytoplasm</location>
    </subcellularLocation>
</comment>
<comment type="similarity">
    <text evidence="1">Belongs to the class I-like SAM-binding methyltransferase superfamily. RsmB/NOP family.</text>
</comment>
<comment type="sequence caution" evidence="2">
    <conflict type="erroneous initiation">
        <sequence resource="EMBL-CDS" id="ACD08629"/>
    </conflict>
</comment>
<protein>
    <recommendedName>
        <fullName evidence="1">Ribosomal RNA small subunit methyltransferase F</fullName>
        <ecNumber evidence="1">2.1.1.178</ecNumber>
    </recommendedName>
    <alternativeName>
        <fullName evidence="1">16S rRNA m5C1407 methyltransferase</fullName>
    </alternativeName>
    <alternativeName>
        <fullName evidence="1">rRNA (cytosine-C(5)-)-methyltransferase RsmF</fullName>
    </alternativeName>
</protein>
<gene>
    <name evidence="1" type="primary">rsmF</name>
    <name type="ordered locus">SbBS512_E2103</name>
</gene>
<accession>B2U477</accession>
<proteinExistence type="inferred from homology"/>
<name>RSMF_SHIB3</name>